<reference key="1">
    <citation type="journal article" date="1998" name="DNA Res.">
        <title>Sequence analysis of the Bacillus subtilis 168 chromosome region between the sspC and odhA loci (184 degrees-180 degrees).</title>
        <authorList>
            <person name="Ghim S.-Y."/>
            <person name="Choi S.-K."/>
            <person name="Shin B.-S."/>
            <person name="Jeong Y.-M."/>
            <person name="Sorokin A."/>
            <person name="Ehrlich S.D."/>
            <person name="Park S.-H."/>
        </authorList>
    </citation>
    <scope>NUCLEOTIDE SEQUENCE [GENOMIC DNA]</scope>
    <source>
        <strain>168</strain>
    </source>
</reference>
<reference key="2">
    <citation type="journal article" date="1997" name="Nature">
        <title>The complete genome sequence of the Gram-positive bacterium Bacillus subtilis.</title>
        <authorList>
            <person name="Kunst F."/>
            <person name="Ogasawara N."/>
            <person name="Moszer I."/>
            <person name="Albertini A.M."/>
            <person name="Alloni G."/>
            <person name="Azevedo V."/>
            <person name="Bertero M.G."/>
            <person name="Bessieres P."/>
            <person name="Bolotin A."/>
            <person name="Borchert S."/>
            <person name="Borriss R."/>
            <person name="Boursier L."/>
            <person name="Brans A."/>
            <person name="Braun M."/>
            <person name="Brignell S.C."/>
            <person name="Bron S."/>
            <person name="Brouillet S."/>
            <person name="Bruschi C.V."/>
            <person name="Caldwell B."/>
            <person name="Capuano V."/>
            <person name="Carter N.M."/>
            <person name="Choi S.-K."/>
            <person name="Codani J.-J."/>
            <person name="Connerton I.F."/>
            <person name="Cummings N.J."/>
            <person name="Daniel R.A."/>
            <person name="Denizot F."/>
            <person name="Devine K.M."/>
            <person name="Duesterhoeft A."/>
            <person name="Ehrlich S.D."/>
            <person name="Emmerson P.T."/>
            <person name="Entian K.-D."/>
            <person name="Errington J."/>
            <person name="Fabret C."/>
            <person name="Ferrari E."/>
            <person name="Foulger D."/>
            <person name="Fritz C."/>
            <person name="Fujita M."/>
            <person name="Fujita Y."/>
            <person name="Fuma S."/>
            <person name="Galizzi A."/>
            <person name="Galleron N."/>
            <person name="Ghim S.-Y."/>
            <person name="Glaser P."/>
            <person name="Goffeau A."/>
            <person name="Golightly E.J."/>
            <person name="Grandi G."/>
            <person name="Guiseppi G."/>
            <person name="Guy B.J."/>
            <person name="Haga K."/>
            <person name="Haiech J."/>
            <person name="Harwood C.R."/>
            <person name="Henaut A."/>
            <person name="Hilbert H."/>
            <person name="Holsappel S."/>
            <person name="Hosono S."/>
            <person name="Hullo M.-F."/>
            <person name="Itaya M."/>
            <person name="Jones L.-M."/>
            <person name="Joris B."/>
            <person name="Karamata D."/>
            <person name="Kasahara Y."/>
            <person name="Klaerr-Blanchard M."/>
            <person name="Klein C."/>
            <person name="Kobayashi Y."/>
            <person name="Koetter P."/>
            <person name="Koningstein G."/>
            <person name="Krogh S."/>
            <person name="Kumano M."/>
            <person name="Kurita K."/>
            <person name="Lapidus A."/>
            <person name="Lardinois S."/>
            <person name="Lauber J."/>
            <person name="Lazarevic V."/>
            <person name="Lee S.-M."/>
            <person name="Levine A."/>
            <person name="Liu H."/>
            <person name="Masuda S."/>
            <person name="Mauel C."/>
            <person name="Medigue C."/>
            <person name="Medina N."/>
            <person name="Mellado R.P."/>
            <person name="Mizuno M."/>
            <person name="Moestl D."/>
            <person name="Nakai S."/>
            <person name="Noback M."/>
            <person name="Noone D."/>
            <person name="O'Reilly M."/>
            <person name="Ogawa K."/>
            <person name="Ogiwara A."/>
            <person name="Oudega B."/>
            <person name="Park S.-H."/>
            <person name="Parro V."/>
            <person name="Pohl T.M."/>
            <person name="Portetelle D."/>
            <person name="Porwollik S."/>
            <person name="Prescott A.M."/>
            <person name="Presecan E."/>
            <person name="Pujic P."/>
            <person name="Purnelle B."/>
            <person name="Rapoport G."/>
            <person name="Rey M."/>
            <person name="Reynolds S."/>
            <person name="Rieger M."/>
            <person name="Rivolta C."/>
            <person name="Rocha E."/>
            <person name="Roche B."/>
            <person name="Rose M."/>
            <person name="Sadaie Y."/>
            <person name="Sato T."/>
            <person name="Scanlan E."/>
            <person name="Schleich S."/>
            <person name="Schroeter R."/>
            <person name="Scoffone F."/>
            <person name="Sekiguchi J."/>
            <person name="Sekowska A."/>
            <person name="Seror S.J."/>
            <person name="Serror P."/>
            <person name="Shin B.-S."/>
            <person name="Soldo B."/>
            <person name="Sorokin A."/>
            <person name="Tacconi E."/>
            <person name="Takagi T."/>
            <person name="Takahashi H."/>
            <person name="Takemaru K."/>
            <person name="Takeuchi M."/>
            <person name="Tamakoshi A."/>
            <person name="Tanaka T."/>
            <person name="Terpstra P."/>
            <person name="Tognoni A."/>
            <person name="Tosato V."/>
            <person name="Uchiyama S."/>
            <person name="Vandenbol M."/>
            <person name="Vannier F."/>
            <person name="Vassarotti A."/>
            <person name="Viari A."/>
            <person name="Wambutt R."/>
            <person name="Wedler E."/>
            <person name="Wedler H."/>
            <person name="Weitzenegger T."/>
            <person name="Winters P."/>
            <person name="Wipat A."/>
            <person name="Yamamoto H."/>
            <person name="Yamane K."/>
            <person name="Yasumoto K."/>
            <person name="Yata K."/>
            <person name="Yoshida K."/>
            <person name="Yoshikawa H.-F."/>
            <person name="Zumstein E."/>
            <person name="Yoshikawa H."/>
            <person name="Danchin A."/>
        </authorList>
    </citation>
    <scope>NUCLEOTIDE SEQUENCE [LARGE SCALE GENOMIC DNA]</scope>
    <source>
        <strain>168</strain>
    </source>
</reference>
<evidence type="ECO:0000305" key="1"/>
<name>YODH_BACSU</name>
<gene>
    <name type="primary">yodH</name>
    <name type="synonym">yolB</name>
    <name type="ordered locus">BSU19600</name>
</gene>
<proteinExistence type="inferred from homology"/>
<sequence length="233" mass="26069">MSRYLEMLSLFGVAGAHPGGLAFSKAVLQKAAPSPDQPILDAGCGTGQTAAYLGHLLYPVTVVDKDPIMLEKAKKRFANEGLAIPAYQAELEHLPFSSESFSCVLSESVLSFSRLTSSLQEISRVLKPSGMLIGIEAALKKPMPPAEKKQMMDFYGFTCLHEESEWHKLLRSYGFQKTEAMSLLPEDMEFEPTTEMDLSQTIDPIYYDTLQTHYQLMQLYSEYMGHCIFIAYK</sequence>
<accession>O34954</accession>
<accession>Q796B7</accession>
<protein>
    <recommendedName>
        <fullName>Uncharacterized methyltransferase YodH</fullName>
        <ecNumber>2.1.1.-</ecNumber>
    </recommendedName>
</protein>
<dbReference type="EC" id="2.1.1.-"/>
<dbReference type="EMBL" id="AF015775">
    <property type="protein sequence ID" value="AAB72055.1"/>
    <property type="molecule type" value="Genomic_DNA"/>
</dbReference>
<dbReference type="EMBL" id="AF006665">
    <property type="protein sequence ID" value="AAB81167.1"/>
    <property type="molecule type" value="Genomic_DNA"/>
</dbReference>
<dbReference type="EMBL" id="AL009126">
    <property type="protein sequence ID" value="CAB13851.1"/>
    <property type="molecule type" value="Genomic_DNA"/>
</dbReference>
<dbReference type="PIR" id="D69903">
    <property type="entry name" value="D69903"/>
</dbReference>
<dbReference type="RefSeq" id="NP_389841.1">
    <property type="nucleotide sequence ID" value="NC_000964.3"/>
</dbReference>
<dbReference type="RefSeq" id="WP_004399589.1">
    <property type="nucleotide sequence ID" value="NZ_OZ025638.1"/>
</dbReference>
<dbReference type="SMR" id="O34954"/>
<dbReference type="FunCoup" id="O34954">
    <property type="interactions" value="64"/>
</dbReference>
<dbReference type="STRING" id="224308.BSU19600"/>
<dbReference type="PaxDb" id="224308-BSU19600"/>
<dbReference type="EnsemblBacteria" id="CAB13851">
    <property type="protein sequence ID" value="CAB13851"/>
    <property type="gene ID" value="BSU_19600"/>
</dbReference>
<dbReference type="GeneID" id="940101"/>
<dbReference type="KEGG" id="bsu:BSU19600"/>
<dbReference type="PATRIC" id="fig|224308.179.peg.2143"/>
<dbReference type="eggNOG" id="COG2226">
    <property type="taxonomic scope" value="Bacteria"/>
</dbReference>
<dbReference type="InParanoid" id="O34954"/>
<dbReference type="OrthoDB" id="43862at2"/>
<dbReference type="BioCyc" id="BSUB:BSU19600-MONOMER"/>
<dbReference type="Proteomes" id="UP000001570">
    <property type="component" value="Chromosome"/>
</dbReference>
<dbReference type="GO" id="GO:0008168">
    <property type="term" value="F:methyltransferase activity"/>
    <property type="evidence" value="ECO:0000318"/>
    <property type="project" value="GO_Central"/>
</dbReference>
<dbReference type="GO" id="GO:0008757">
    <property type="term" value="F:S-adenosylmethionine-dependent methyltransferase activity"/>
    <property type="evidence" value="ECO:0007669"/>
    <property type="project" value="InterPro"/>
</dbReference>
<dbReference type="GO" id="GO:0032259">
    <property type="term" value="P:methylation"/>
    <property type="evidence" value="ECO:0007669"/>
    <property type="project" value="UniProtKB-KW"/>
</dbReference>
<dbReference type="CDD" id="cd02440">
    <property type="entry name" value="AdoMet_MTases"/>
    <property type="match status" value="1"/>
</dbReference>
<dbReference type="Gene3D" id="3.40.50.150">
    <property type="entry name" value="Vaccinia Virus protein VP39"/>
    <property type="match status" value="1"/>
</dbReference>
<dbReference type="InterPro" id="IPR013216">
    <property type="entry name" value="Methyltransf_11"/>
</dbReference>
<dbReference type="InterPro" id="IPR050508">
    <property type="entry name" value="Methyltransf_Superfamily"/>
</dbReference>
<dbReference type="InterPro" id="IPR029063">
    <property type="entry name" value="SAM-dependent_MTases_sf"/>
</dbReference>
<dbReference type="PANTHER" id="PTHR42912">
    <property type="entry name" value="METHYLTRANSFERASE"/>
    <property type="match status" value="1"/>
</dbReference>
<dbReference type="PANTHER" id="PTHR42912:SF80">
    <property type="entry name" value="METHYLTRANSFERASE DOMAIN-CONTAINING PROTEIN"/>
    <property type="match status" value="1"/>
</dbReference>
<dbReference type="Pfam" id="PF08241">
    <property type="entry name" value="Methyltransf_11"/>
    <property type="match status" value="1"/>
</dbReference>
<dbReference type="SUPFAM" id="SSF53335">
    <property type="entry name" value="S-adenosyl-L-methionine-dependent methyltransferases"/>
    <property type="match status" value="1"/>
</dbReference>
<comment type="similarity">
    <text evidence="1">Belongs to the methyltransferase superfamily.</text>
</comment>
<organism>
    <name type="scientific">Bacillus subtilis (strain 168)</name>
    <dbReference type="NCBI Taxonomy" id="224308"/>
    <lineage>
        <taxon>Bacteria</taxon>
        <taxon>Bacillati</taxon>
        <taxon>Bacillota</taxon>
        <taxon>Bacilli</taxon>
        <taxon>Bacillales</taxon>
        <taxon>Bacillaceae</taxon>
        <taxon>Bacillus</taxon>
    </lineage>
</organism>
<feature type="chain" id="PRO_0000381937" description="Uncharacterized methyltransferase YodH">
    <location>
        <begin position="1"/>
        <end position="233"/>
    </location>
</feature>
<keyword id="KW-0489">Methyltransferase</keyword>
<keyword id="KW-1185">Reference proteome</keyword>
<keyword id="KW-0808">Transferase</keyword>